<comment type="function">
    <text evidence="3 4 5 7 9 10 11">Phosphatidylinositol-4-phosphate-binding protein that links Golgi membranes to the cytoskeleton and may participate in the tensile force required for vesicle budding from the Golgi. Thereby, may play a role in Golgi membrane trafficking and could indirectly give its flattened shape to the Golgi apparatus. May also bind to the coatomer to regulate Golgi membrane trafficking. May play a role in anterograde transport from the Golgi to the plasma membrane and regulate secretion. Has also been involved in the control of the localization of Golgi enzymes through interaction with their cytoplasmic part. May play an indirect role in cell migration. Has also been involved in the modulation of mTOR signaling. May also be involved in the regulation of mitochondrial lipids biosynthesis.</text>
</comment>
<comment type="subunit">
    <text evidence="4 5 9 10 12">Homodimer. Interacts with the coatomer complex. Interacts with MYO18A; the interaction is direct and may link Golgi membranes to the actin cytoskeleton. Interacts with GCNT1; may control its retention in the Golgi. Interacts with VPS35.</text>
</comment>
<comment type="interaction">
    <interactant intactId="EBI-2465479">
        <id>Q9H4A6</id>
    </interactant>
    <interactant intactId="EBI-714543">
        <id>Q15041</id>
        <label>ARL6IP1</label>
    </interactant>
    <organismsDiffer>false</organismsDiffer>
    <experiments>3</experiments>
</comment>
<comment type="interaction">
    <interactant intactId="EBI-2465479">
        <id>Q9H4A6</id>
    </interactant>
    <interactant intactId="EBI-8766035">
        <id>Q02742</id>
        <label>GCNT1</label>
    </interactant>
    <organismsDiffer>false</organismsDiffer>
    <experiments>6</experiments>
</comment>
<comment type="interaction">
    <interactant intactId="EBI-2465479">
        <id>Q9H4A6</id>
    </interactant>
    <interactant intactId="EBI-949059">
        <id>Q92614</id>
        <label>MYO18A</label>
    </interactant>
    <organismsDiffer>false</organismsDiffer>
    <experiments>6</experiments>
</comment>
<comment type="interaction">
    <interactant intactId="EBI-2465479">
        <id>Q9H4A6</id>
    </interactant>
    <interactant intactId="EBI-357997">
        <id>P13010</id>
        <label>XRCC5</label>
    </interactant>
    <organismsDiffer>false</organismsDiffer>
    <experiments>2</experiments>
</comment>
<comment type="interaction">
    <interactant intactId="EBI-2465479">
        <id>Q9H4A6</id>
    </interactant>
    <interactant intactId="EBI-6164519">
        <id>P12520</id>
        <label>vpr</label>
    </interactant>
    <organismsDiffer>true</organismsDiffer>
    <experiments>3</experiments>
</comment>
<comment type="subcellular location">
    <subcellularLocation>
        <location>Golgi apparatus</location>
        <location>Golgi stack membrane</location>
        <topology>Peripheral membrane protein</topology>
        <orientation>Cytoplasmic side</orientation>
    </subcellularLocation>
    <subcellularLocation>
        <location>Golgi apparatus</location>
        <location>trans-Golgi network membrane</location>
        <topology>Peripheral membrane protein</topology>
        <orientation>Cytoplasmic side</orientation>
    </subcellularLocation>
    <subcellularLocation>
        <location>Mitochondrion intermembrane space</location>
    </subcellularLocation>
    <subcellularLocation>
        <location evidence="1">Cell membrane</location>
    </subcellularLocation>
    <subcellularLocation>
        <location evidence="1">Endosome</location>
    </subcellularLocation>
    <text evidence="13">Phosphatidylinositol 4-phosphate-binding and oligomerization participate in the recruitment onto Golgi membranes.</text>
</comment>
<comment type="tissue specificity">
    <text>Detected in muscle fibers of patients with mitochondrial diseases; not detected in normal muscle fibers.</text>
</comment>
<comment type="induction">
    <text>Activated by depletion of mitochondrial DNA.</text>
</comment>
<comment type="PTM">
    <text evidence="1">Phosphorylated.</text>
</comment>
<comment type="miscellaneous">
    <text>Modulates sensitivity to rapamycin. Tumors expressing this protein are more sensitive to rapamycin in vivo.</text>
</comment>
<comment type="similarity">
    <text evidence="13">Belongs to the GOLPH3/VPS74 family.</text>
</comment>
<feature type="chain" id="PRO_0000123819" description="Golgi phosphoprotein 3">
    <location>
        <begin position="1"/>
        <end position="298"/>
    </location>
</feature>
<feature type="region of interest" description="Disordered" evidence="2">
    <location>
        <begin position="1"/>
        <end position="57"/>
    </location>
</feature>
<feature type="region of interest" description="Beta-hairpin required for oligomerization" evidence="1">
    <location>
        <begin position="190"/>
        <end position="201"/>
    </location>
</feature>
<feature type="compositionally biased region" description="Polar residues" evidence="2">
    <location>
        <begin position="1"/>
        <end position="11"/>
    </location>
</feature>
<feature type="compositionally biased region" description="Basic and acidic residues" evidence="2">
    <location>
        <begin position="14"/>
        <end position="28"/>
    </location>
</feature>
<feature type="binding site" evidence="13">
    <location>
        <position position="81"/>
    </location>
    <ligand>
        <name>a 1,2-diacyl-sn-glycero-3-phospho-(1D-myo-inositol 4-phosphate)</name>
        <dbReference type="ChEBI" id="CHEBI:58178"/>
    </ligand>
</feature>
<feature type="binding site" evidence="13">
    <location>
        <position position="90"/>
    </location>
    <ligand>
        <name>a 1,2-diacyl-sn-glycero-3-phospho-(1D-myo-inositol 4-phosphate)</name>
        <dbReference type="ChEBI" id="CHEBI:58178"/>
    </ligand>
</feature>
<feature type="binding site" evidence="13">
    <location>
        <position position="171"/>
    </location>
    <ligand>
        <name>a 1,2-diacyl-sn-glycero-3-phospho-(1D-myo-inositol 4-phosphate)</name>
        <dbReference type="ChEBI" id="CHEBI:58178"/>
    </ligand>
</feature>
<feature type="binding site" evidence="13">
    <location>
        <position position="174"/>
    </location>
    <ligand>
        <name>a 1,2-diacyl-sn-glycero-3-phospho-(1D-myo-inositol 4-phosphate)</name>
        <dbReference type="ChEBI" id="CHEBI:58178"/>
    </ligand>
</feature>
<feature type="modified residue" description="Phosphoserine" evidence="15">
    <location>
        <position position="35"/>
    </location>
</feature>
<feature type="modified residue" description="Phosphoserine" evidence="14 15">
    <location>
        <position position="36"/>
    </location>
</feature>
<feature type="disulfide bond" evidence="6">
    <location>
        <begin position="84"/>
        <end position="108"/>
    </location>
</feature>
<feature type="mutagenesis site" description="Altered binding to coatomer." evidence="8">
    <original>R</original>
    <variation>A</variation>
    <location>
        <position position="7"/>
    </location>
</feature>
<feature type="mutagenesis site" description="Loss of binding to coatomer." evidence="8">
    <original>RR</original>
    <variation>AA</variation>
    <location>
        <begin position="14"/>
        <end position="15"/>
    </location>
</feature>
<feature type="mutagenesis site" description="Abolishes phosphoinositide binding and localization to the Golgi apparatus; when associated with A-90." evidence="6">
    <original>W</original>
    <variation>A</variation>
    <location>
        <position position="81"/>
    </location>
</feature>
<feature type="mutagenesis site" description="Abolishes phosphoinositide binding and localization to the Golgi apparatus; when associated with A-81." evidence="5 6">
    <original>R</original>
    <variation>A</variation>
    <location>
        <position position="90"/>
    </location>
</feature>
<feature type="mutagenesis site" description="Loss of function in vesicle budding, abolishes phosphoinositide binding and localization to the Golgi apparatus." evidence="5 6">
    <original>R</original>
    <variation>L</variation>
    <location>
        <position position="90"/>
    </location>
</feature>
<feature type="mutagenesis site" description="Abolishes phosphoinositide binding and localization to the Golgi apparatus; when associated with A-174." evidence="5 6">
    <original>R</original>
    <variation>A</variation>
    <variation>L</variation>
    <location>
        <position position="171"/>
    </location>
</feature>
<feature type="mutagenesis site" description="Abolishes phosphoinositide binding and localization to the Golgi apparatus; when associated with A-171 or L-171." evidence="5 6">
    <original>R</original>
    <variation>A</variation>
    <location>
        <position position="174"/>
    </location>
</feature>
<feature type="helix" evidence="16">
    <location>
        <begin position="62"/>
        <end position="69"/>
    </location>
</feature>
<feature type="strand" evidence="16">
    <location>
        <begin position="73"/>
        <end position="75"/>
    </location>
</feature>
<feature type="helix" evidence="16">
    <location>
        <begin position="83"/>
        <end position="99"/>
    </location>
</feature>
<feature type="strand" evidence="16">
    <location>
        <begin position="102"/>
        <end position="105"/>
    </location>
</feature>
<feature type="turn" evidence="16">
    <location>
        <begin position="110"/>
        <end position="112"/>
    </location>
</feature>
<feature type="turn" evidence="16">
    <location>
        <begin position="115"/>
        <end position="117"/>
    </location>
</feature>
<feature type="strand" evidence="16">
    <location>
        <begin position="118"/>
        <end position="123"/>
    </location>
</feature>
<feature type="helix" evidence="16">
    <location>
        <begin position="131"/>
        <end position="142"/>
    </location>
</feature>
<feature type="helix" evidence="16">
    <location>
        <begin position="149"/>
        <end position="156"/>
    </location>
</feature>
<feature type="helix" evidence="16">
    <location>
        <begin position="163"/>
        <end position="166"/>
    </location>
</feature>
<feature type="helix" evidence="16">
    <location>
        <begin position="173"/>
        <end position="183"/>
    </location>
</feature>
<feature type="strand" evidence="16">
    <location>
        <begin position="190"/>
        <end position="194"/>
    </location>
</feature>
<feature type="strand" evidence="16">
    <location>
        <begin position="197"/>
        <end position="201"/>
    </location>
</feature>
<feature type="helix" evidence="16">
    <location>
        <begin position="207"/>
        <end position="220"/>
    </location>
</feature>
<feature type="turn" evidence="16">
    <location>
        <begin position="221"/>
        <end position="224"/>
    </location>
</feature>
<feature type="helix" evidence="16">
    <location>
        <begin position="229"/>
        <end position="231"/>
    </location>
</feature>
<feature type="helix" evidence="16">
    <location>
        <begin position="234"/>
        <end position="245"/>
    </location>
</feature>
<feature type="helix" evidence="16">
    <location>
        <begin position="250"/>
        <end position="253"/>
    </location>
</feature>
<feature type="helix" evidence="16">
    <location>
        <begin position="258"/>
        <end position="273"/>
    </location>
</feature>
<feature type="helix" evidence="16">
    <location>
        <begin position="276"/>
        <end position="279"/>
    </location>
</feature>
<feature type="strand" evidence="16">
    <location>
        <begin position="282"/>
        <end position="284"/>
    </location>
</feature>
<feature type="helix" evidence="16">
    <location>
        <begin position="287"/>
        <end position="295"/>
    </location>
</feature>
<protein>
    <recommendedName>
        <fullName>Golgi phosphoprotein 3</fullName>
    </recommendedName>
    <alternativeName>
        <fullName>Coat protein GPP34</fullName>
    </alternativeName>
    <alternativeName>
        <fullName>Mitochondrial DNA absence factor</fullName>
        <shortName>MIDAS</shortName>
    </alternativeName>
</protein>
<reference key="1">
    <citation type="journal article" date="2001" name="J. Biol. Chem.">
        <title>Proteomics characterization of abundant Golgi membrane proteins.</title>
        <authorList>
            <person name="Bell A.W."/>
            <person name="Ward M.A."/>
            <person name="Blackstock W.P."/>
            <person name="Freeman H.N.M."/>
            <person name="Choudhary J.S."/>
            <person name="Lewis A.P."/>
            <person name="Chotai D."/>
            <person name="Fazel A."/>
            <person name="Gushue J.N."/>
            <person name="Paiement J."/>
            <person name="Palcy S."/>
            <person name="Chevet E."/>
            <person name="Lafreniere-Roula M."/>
            <person name="Solari R."/>
            <person name="Thomas D.Y."/>
            <person name="Rowley A."/>
            <person name="Bergeron J.J.M."/>
        </authorList>
    </citation>
    <scope>NUCLEOTIDE SEQUENCE [MRNA]</scope>
    <scope>IDENTIFICATION BY MASS SPECTROMETRY</scope>
    <scope>SUBCELLULAR LOCATION</scope>
</reference>
<reference key="2">
    <citation type="journal article" date="2004" name="Nat. Genet.">
        <title>Complete sequencing and characterization of 21,243 full-length human cDNAs.</title>
        <authorList>
            <person name="Ota T."/>
            <person name="Suzuki Y."/>
            <person name="Nishikawa T."/>
            <person name="Otsuki T."/>
            <person name="Sugiyama T."/>
            <person name="Irie R."/>
            <person name="Wakamatsu A."/>
            <person name="Hayashi K."/>
            <person name="Sato H."/>
            <person name="Nagai K."/>
            <person name="Kimura K."/>
            <person name="Makita H."/>
            <person name="Sekine M."/>
            <person name="Obayashi M."/>
            <person name="Nishi T."/>
            <person name="Shibahara T."/>
            <person name="Tanaka T."/>
            <person name="Ishii S."/>
            <person name="Yamamoto J."/>
            <person name="Saito K."/>
            <person name="Kawai Y."/>
            <person name="Isono Y."/>
            <person name="Nakamura Y."/>
            <person name="Nagahari K."/>
            <person name="Murakami K."/>
            <person name="Yasuda T."/>
            <person name="Iwayanagi T."/>
            <person name="Wagatsuma M."/>
            <person name="Shiratori A."/>
            <person name="Sudo H."/>
            <person name="Hosoiri T."/>
            <person name="Kaku Y."/>
            <person name="Kodaira H."/>
            <person name="Kondo H."/>
            <person name="Sugawara M."/>
            <person name="Takahashi M."/>
            <person name="Kanda K."/>
            <person name="Yokoi T."/>
            <person name="Furuya T."/>
            <person name="Kikkawa E."/>
            <person name="Omura Y."/>
            <person name="Abe K."/>
            <person name="Kamihara K."/>
            <person name="Katsuta N."/>
            <person name="Sato K."/>
            <person name="Tanikawa M."/>
            <person name="Yamazaki M."/>
            <person name="Ninomiya K."/>
            <person name="Ishibashi T."/>
            <person name="Yamashita H."/>
            <person name="Murakawa K."/>
            <person name="Fujimori K."/>
            <person name="Tanai H."/>
            <person name="Kimata M."/>
            <person name="Watanabe M."/>
            <person name="Hiraoka S."/>
            <person name="Chiba Y."/>
            <person name="Ishida S."/>
            <person name="Ono Y."/>
            <person name="Takiguchi S."/>
            <person name="Watanabe S."/>
            <person name="Yosida M."/>
            <person name="Hotuta T."/>
            <person name="Kusano J."/>
            <person name="Kanehori K."/>
            <person name="Takahashi-Fujii A."/>
            <person name="Hara H."/>
            <person name="Tanase T.-O."/>
            <person name="Nomura Y."/>
            <person name="Togiya S."/>
            <person name="Komai F."/>
            <person name="Hara R."/>
            <person name="Takeuchi K."/>
            <person name="Arita M."/>
            <person name="Imose N."/>
            <person name="Musashino K."/>
            <person name="Yuuki H."/>
            <person name="Oshima A."/>
            <person name="Sasaki N."/>
            <person name="Aotsuka S."/>
            <person name="Yoshikawa Y."/>
            <person name="Matsunawa H."/>
            <person name="Ichihara T."/>
            <person name="Shiohata N."/>
            <person name="Sano S."/>
            <person name="Moriya S."/>
            <person name="Momiyama H."/>
            <person name="Satoh N."/>
            <person name="Takami S."/>
            <person name="Terashima Y."/>
            <person name="Suzuki O."/>
            <person name="Nakagawa S."/>
            <person name="Senoh A."/>
            <person name="Mizoguchi H."/>
            <person name="Goto Y."/>
            <person name="Shimizu F."/>
            <person name="Wakebe H."/>
            <person name="Hishigaki H."/>
            <person name="Watanabe T."/>
            <person name="Sugiyama A."/>
            <person name="Takemoto M."/>
            <person name="Kawakami B."/>
            <person name="Yamazaki M."/>
            <person name="Watanabe K."/>
            <person name="Kumagai A."/>
            <person name="Itakura S."/>
            <person name="Fukuzumi Y."/>
            <person name="Fujimori Y."/>
            <person name="Komiyama M."/>
            <person name="Tashiro H."/>
            <person name="Tanigami A."/>
            <person name="Fujiwara T."/>
            <person name="Ono T."/>
            <person name="Yamada K."/>
            <person name="Fujii Y."/>
            <person name="Ozaki K."/>
            <person name="Hirao M."/>
            <person name="Ohmori Y."/>
            <person name="Kawabata A."/>
            <person name="Hikiji T."/>
            <person name="Kobatake N."/>
            <person name="Inagaki H."/>
            <person name="Ikema Y."/>
            <person name="Okamoto S."/>
            <person name="Okitani R."/>
            <person name="Kawakami T."/>
            <person name="Noguchi S."/>
            <person name="Itoh T."/>
            <person name="Shigeta K."/>
            <person name="Senba T."/>
            <person name="Matsumura K."/>
            <person name="Nakajima Y."/>
            <person name="Mizuno T."/>
            <person name="Morinaga M."/>
            <person name="Sasaki M."/>
            <person name="Togashi T."/>
            <person name="Oyama M."/>
            <person name="Hata H."/>
            <person name="Watanabe M."/>
            <person name="Komatsu T."/>
            <person name="Mizushima-Sugano J."/>
            <person name="Satoh T."/>
            <person name="Shirai Y."/>
            <person name="Takahashi Y."/>
            <person name="Nakagawa K."/>
            <person name="Okumura K."/>
            <person name="Nagase T."/>
            <person name="Nomura N."/>
            <person name="Kikuchi H."/>
            <person name="Masuho Y."/>
            <person name="Yamashita R."/>
            <person name="Nakai K."/>
            <person name="Yada T."/>
            <person name="Nakamura Y."/>
            <person name="Ohara O."/>
            <person name="Isogai T."/>
            <person name="Sugano S."/>
        </authorList>
    </citation>
    <scope>NUCLEOTIDE SEQUENCE [LARGE SCALE MRNA]</scope>
    <source>
        <tissue>Placenta</tissue>
    </source>
</reference>
<reference key="3">
    <citation type="journal article" date="2006" name="Nature">
        <title>The DNA sequence and biological annotation of human chromosome 1.</title>
        <authorList>
            <person name="Gregory S.G."/>
            <person name="Barlow K.F."/>
            <person name="McLay K.E."/>
            <person name="Kaul R."/>
            <person name="Swarbreck D."/>
            <person name="Dunham A."/>
            <person name="Scott C.E."/>
            <person name="Howe K.L."/>
            <person name="Woodfine K."/>
            <person name="Spencer C.C.A."/>
            <person name="Jones M.C."/>
            <person name="Gillson C."/>
            <person name="Searle S."/>
            <person name="Zhou Y."/>
            <person name="Kokocinski F."/>
            <person name="McDonald L."/>
            <person name="Evans R."/>
            <person name="Phillips K."/>
            <person name="Atkinson A."/>
            <person name="Cooper R."/>
            <person name="Jones C."/>
            <person name="Hall R.E."/>
            <person name="Andrews T.D."/>
            <person name="Lloyd C."/>
            <person name="Ainscough R."/>
            <person name="Almeida J.P."/>
            <person name="Ambrose K.D."/>
            <person name="Anderson F."/>
            <person name="Andrew R.W."/>
            <person name="Ashwell R.I.S."/>
            <person name="Aubin K."/>
            <person name="Babbage A.K."/>
            <person name="Bagguley C.L."/>
            <person name="Bailey J."/>
            <person name="Beasley H."/>
            <person name="Bethel G."/>
            <person name="Bird C.P."/>
            <person name="Bray-Allen S."/>
            <person name="Brown J.Y."/>
            <person name="Brown A.J."/>
            <person name="Buckley D."/>
            <person name="Burton J."/>
            <person name="Bye J."/>
            <person name="Carder C."/>
            <person name="Chapman J.C."/>
            <person name="Clark S.Y."/>
            <person name="Clarke G."/>
            <person name="Clee C."/>
            <person name="Cobley V."/>
            <person name="Collier R.E."/>
            <person name="Corby N."/>
            <person name="Coville G.J."/>
            <person name="Davies J."/>
            <person name="Deadman R."/>
            <person name="Dunn M."/>
            <person name="Earthrowl M."/>
            <person name="Ellington A.G."/>
            <person name="Errington H."/>
            <person name="Frankish A."/>
            <person name="Frankland J."/>
            <person name="French L."/>
            <person name="Garner P."/>
            <person name="Garnett J."/>
            <person name="Gay L."/>
            <person name="Ghori M.R.J."/>
            <person name="Gibson R."/>
            <person name="Gilby L.M."/>
            <person name="Gillett W."/>
            <person name="Glithero R.J."/>
            <person name="Grafham D.V."/>
            <person name="Griffiths C."/>
            <person name="Griffiths-Jones S."/>
            <person name="Grocock R."/>
            <person name="Hammond S."/>
            <person name="Harrison E.S.I."/>
            <person name="Hart E."/>
            <person name="Haugen E."/>
            <person name="Heath P.D."/>
            <person name="Holmes S."/>
            <person name="Holt K."/>
            <person name="Howden P.J."/>
            <person name="Hunt A.R."/>
            <person name="Hunt S.E."/>
            <person name="Hunter G."/>
            <person name="Isherwood J."/>
            <person name="James R."/>
            <person name="Johnson C."/>
            <person name="Johnson D."/>
            <person name="Joy A."/>
            <person name="Kay M."/>
            <person name="Kershaw J.K."/>
            <person name="Kibukawa M."/>
            <person name="Kimberley A.M."/>
            <person name="King A."/>
            <person name="Knights A.J."/>
            <person name="Lad H."/>
            <person name="Laird G."/>
            <person name="Lawlor S."/>
            <person name="Leongamornlert D.A."/>
            <person name="Lloyd D.M."/>
            <person name="Loveland J."/>
            <person name="Lovell J."/>
            <person name="Lush M.J."/>
            <person name="Lyne R."/>
            <person name="Martin S."/>
            <person name="Mashreghi-Mohammadi M."/>
            <person name="Matthews L."/>
            <person name="Matthews N.S.W."/>
            <person name="McLaren S."/>
            <person name="Milne S."/>
            <person name="Mistry S."/>
            <person name="Moore M.J.F."/>
            <person name="Nickerson T."/>
            <person name="O'Dell C.N."/>
            <person name="Oliver K."/>
            <person name="Palmeiri A."/>
            <person name="Palmer S.A."/>
            <person name="Parker A."/>
            <person name="Patel D."/>
            <person name="Pearce A.V."/>
            <person name="Peck A.I."/>
            <person name="Pelan S."/>
            <person name="Phelps K."/>
            <person name="Phillimore B.J."/>
            <person name="Plumb R."/>
            <person name="Rajan J."/>
            <person name="Raymond C."/>
            <person name="Rouse G."/>
            <person name="Saenphimmachak C."/>
            <person name="Sehra H.K."/>
            <person name="Sheridan E."/>
            <person name="Shownkeen R."/>
            <person name="Sims S."/>
            <person name="Skuce C.D."/>
            <person name="Smith M."/>
            <person name="Steward C."/>
            <person name="Subramanian S."/>
            <person name="Sycamore N."/>
            <person name="Tracey A."/>
            <person name="Tromans A."/>
            <person name="Van Helmond Z."/>
            <person name="Wall M."/>
            <person name="Wallis J.M."/>
            <person name="White S."/>
            <person name="Whitehead S.L."/>
            <person name="Wilkinson J.E."/>
            <person name="Willey D.L."/>
            <person name="Williams H."/>
            <person name="Wilming L."/>
            <person name="Wray P.W."/>
            <person name="Wu Z."/>
            <person name="Coulson A."/>
            <person name="Vaudin M."/>
            <person name="Sulston J.E."/>
            <person name="Durbin R.M."/>
            <person name="Hubbard T."/>
            <person name="Wooster R."/>
            <person name="Dunham I."/>
            <person name="Carter N.P."/>
            <person name="McVean G."/>
            <person name="Ross M.T."/>
            <person name="Harrow J."/>
            <person name="Olson M.V."/>
            <person name="Beck S."/>
            <person name="Rogers J."/>
            <person name="Bentley D.R."/>
        </authorList>
    </citation>
    <scope>NUCLEOTIDE SEQUENCE [LARGE SCALE GENOMIC DNA]</scope>
</reference>
<reference key="4">
    <citation type="journal article" date="2004" name="Genome Res.">
        <title>The status, quality, and expansion of the NIH full-length cDNA project: the Mammalian Gene Collection (MGC).</title>
        <authorList>
            <consortium name="The MGC Project Team"/>
        </authorList>
    </citation>
    <scope>NUCLEOTIDE SEQUENCE [LARGE SCALE MRNA]</scope>
    <source>
        <tissue>Eye</tissue>
        <tissue>Placenta</tissue>
        <tissue>Prostate</tissue>
    </source>
</reference>
<reference key="5">
    <citation type="journal article" date="2007" name="BMC Genomics">
        <title>The full-ORF clone resource of the German cDNA consortium.</title>
        <authorList>
            <person name="Bechtel S."/>
            <person name="Rosenfelder H."/>
            <person name="Duda A."/>
            <person name="Schmidt C.P."/>
            <person name="Ernst U."/>
            <person name="Wellenreuther R."/>
            <person name="Mehrle A."/>
            <person name="Schuster C."/>
            <person name="Bahr A."/>
            <person name="Bloecker H."/>
            <person name="Heubner D."/>
            <person name="Hoerlein A."/>
            <person name="Michel G."/>
            <person name="Wedler H."/>
            <person name="Koehrer K."/>
            <person name="Ottenwaelder B."/>
            <person name="Poustka A."/>
            <person name="Wiemann S."/>
            <person name="Schupp I."/>
        </authorList>
    </citation>
    <scope>NUCLEOTIDE SEQUENCE [LARGE SCALE MRNA] OF 91-298</scope>
    <source>
        <tissue>Testis</tissue>
    </source>
</reference>
<reference key="6">
    <citation type="journal article" date="2005" name="J. Cell Sci.">
        <title>MIDAS/GPP34, a nuclear gene product, regulates total mitochondrial mass in response to mitochondrial dysfunction.</title>
        <authorList>
            <person name="Nakashima-Kamimura N."/>
            <person name="Asoh S."/>
            <person name="Ishibashi Y."/>
            <person name="Mukai Y."/>
            <person name="Shidara Y."/>
            <person name="Oda H."/>
            <person name="Munakata K."/>
            <person name="Goto Y."/>
            <person name="Ohta S."/>
        </authorList>
    </citation>
    <scope>FUNCTION</scope>
    <scope>SUBCELLULAR LOCATION</scope>
</reference>
<reference key="7">
    <citation type="journal article" date="2009" name="Cell">
        <title>GOLPH3 bridges phosphatidylinositol-4- phosphate and actomyosin to stretch and shape the Golgi to promote budding.</title>
        <authorList>
            <person name="Dippold H.C."/>
            <person name="Ng M.M."/>
            <person name="Farber-Katz S.E."/>
            <person name="Lee S.K."/>
            <person name="Kerr M.L."/>
            <person name="Peterman M.C."/>
            <person name="Sim R."/>
            <person name="Wiharto P.A."/>
            <person name="Galbraith K.A."/>
            <person name="Madhavarapu S."/>
            <person name="Fuchs G.J."/>
            <person name="Meerloo T."/>
            <person name="Farquhar M.G."/>
            <person name="Zhou H."/>
            <person name="Field S.J."/>
        </authorList>
    </citation>
    <scope>FUNCTION IN GOLGI MEMBRANE BUDDING</scope>
    <scope>INTERACTION WITH MYO18A</scope>
    <scope>LIPID-BINDING</scope>
    <scope>SUBCELLULAR LOCATION</scope>
    <scope>MUTAGENESIS OF ARG-90; ARG-171 AND ARG-174</scope>
</reference>
<reference key="8">
    <citation type="journal article" date="2009" name="Nature">
        <title>GOLPH3 modulates mTOR signalling and rapamycin sensitivity in cancer.</title>
        <authorList>
            <person name="Scott K.L."/>
            <person name="Kabbarah O."/>
            <person name="Liang M.C."/>
            <person name="Ivanova E."/>
            <person name="Anagnostou V."/>
            <person name="Wu J."/>
            <person name="Dhakal S."/>
            <person name="Wu M."/>
            <person name="Chen S."/>
            <person name="Feinberg T."/>
            <person name="Huang J."/>
            <person name="Saci A."/>
            <person name="Widlund H.R."/>
            <person name="Fisher D.E."/>
            <person name="Xiao Y."/>
            <person name="Rimm D.L."/>
            <person name="Protopopov A."/>
            <person name="Wong K.K."/>
            <person name="Chin L."/>
        </authorList>
    </citation>
    <scope>FUNCTION IN MTOR SIGNALING</scope>
    <scope>SUBCELLULAR LOCATION</scope>
    <scope>INTERACTION WITH VPS35</scope>
</reference>
<reference key="9">
    <citation type="journal article" date="2011" name="BMC Syst. Biol.">
        <title>Initial characterization of the human central proteome.</title>
        <authorList>
            <person name="Burkard T.R."/>
            <person name="Planyavsky M."/>
            <person name="Kaupe I."/>
            <person name="Breitwieser F.P."/>
            <person name="Buerckstuemmer T."/>
            <person name="Bennett K.L."/>
            <person name="Superti-Furga G."/>
            <person name="Colinge J."/>
        </authorList>
    </citation>
    <scope>IDENTIFICATION BY MASS SPECTROMETRY [LARGE SCALE ANALYSIS]</scope>
</reference>
<reference key="10">
    <citation type="journal article" date="2011" name="Sci. Signal.">
        <title>System-wide temporal characterization of the proteome and phosphoproteome of human embryonic stem cell differentiation.</title>
        <authorList>
            <person name="Rigbolt K.T."/>
            <person name="Prokhorova T.A."/>
            <person name="Akimov V."/>
            <person name="Henningsen J."/>
            <person name="Johansen P.T."/>
            <person name="Kratchmarova I."/>
            <person name="Kassem M."/>
            <person name="Mann M."/>
            <person name="Olsen J.V."/>
            <person name="Blagoev B."/>
        </authorList>
    </citation>
    <scope>PHOSPHORYLATION [LARGE SCALE ANALYSIS] AT SER-36</scope>
    <scope>IDENTIFICATION BY MASS SPECTROMETRY [LARGE SCALE ANALYSIS]</scope>
</reference>
<reference key="11">
    <citation type="journal article" date="2012" name="J. Biol. Chem.">
        <title>Role of phosphatidylinositol 4-phosphate (PI4P) and its binding protein GOLPH3 in hepatitis C virus secretion.</title>
        <authorList>
            <person name="Bishe B."/>
            <person name="Syed G.H."/>
            <person name="Field S.J."/>
            <person name="Siddiqui A."/>
        </authorList>
    </citation>
    <scope>FUNCTION IN SECRETION</scope>
</reference>
<reference key="12">
    <citation type="journal article" date="2012" name="J. Biol. Chem.">
        <title>Golgi phosphoprotein 3 determines cell binding properties under dynamic flow by controlling Golgi localization of core 2 N-acetylglucosaminyltransferase 1.</title>
        <authorList>
            <person name="Ali M.F."/>
            <person name="Chachadi V.B."/>
            <person name="Petrosyan A."/>
            <person name="Cheng P.W."/>
        </authorList>
    </citation>
    <scope>FUNCTION</scope>
    <scope>INTERACTION WITH GCNT1</scope>
    <scope>SUBCELLULAR LOCATION</scope>
</reference>
<reference key="13">
    <citation type="journal article" date="2012" name="Traffic">
        <title>A conserved N-terminal arginine-motif in GOLPH3-family proteins mediates binding to coatomer.</title>
        <authorList>
            <person name="Tu L."/>
            <person name="Chen L."/>
            <person name="Banfield D.K."/>
        </authorList>
    </citation>
    <scope>MUTAGENESIS OF ARG-7 AND 14-ARG--ARG-15</scope>
    <scope>COATOMER-BINDING</scope>
</reference>
<reference key="14">
    <citation type="journal article" date="2013" name="Biochem. Biophys. Res. Commun.">
        <title>GOLPH3 regulates the migration and invasion of glioma cells though RhoA.</title>
        <authorList>
            <person name="Zhou X."/>
            <person name="Zhan W."/>
            <person name="Bian W."/>
            <person name="Hua L."/>
            <person name="Shi Q."/>
            <person name="Xie S."/>
            <person name="Yang D."/>
            <person name="Li Y."/>
            <person name="Zhang X."/>
            <person name="Liu G."/>
            <person name="Yu R."/>
        </authorList>
    </citation>
    <scope>FUNCTION IN CELL MIGRATION</scope>
</reference>
<reference key="15">
    <citation type="journal article" date="2013" name="J. Biol. Chem.">
        <title>Functional Characterization of Human Myosin-18A and its Interaction with F-actin and GOLPH3.</title>
        <authorList>
            <person name="Taft M.H."/>
            <person name="Behrmann E."/>
            <person name="Munske-Weidemann L.C."/>
            <person name="Thiel C."/>
            <person name="Raunser S."/>
            <person name="Manstein D.J."/>
        </authorList>
    </citation>
    <scope>INTERACTION WITH MYO18A</scope>
</reference>
<reference key="16">
    <citation type="journal article" date="2013" name="Mol. Biol. Cell">
        <title>GOLPH3L antagonizes GOLPH3 to determine Golgi morphology.</title>
        <authorList>
            <person name="Ng M.M."/>
            <person name="Dippold H.C."/>
            <person name="Buschman M.D."/>
            <person name="Noakes C.J."/>
            <person name="Field S.J."/>
        </authorList>
    </citation>
    <scope>FUNCTION</scope>
    <scope>INTERACTION WITH MYO18A</scope>
    <scope>SUBCELLULAR LOCATION</scope>
    <scope>LIPID-BINDING</scope>
</reference>
<reference key="17">
    <citation type="journal article" date="2014" name="J. Proteomics">
        <title>An enzyme assisted RP-RPLC approach for in-depth analysis of human liver phosphoproteome.</title>
        <authorList>
            <person name="Bian Y."/>
            <person name="Song C."/>
            <person name="Cheng K."/>
            <person name="Dong M."/>
            <person name="Wang F."/>
            <person name="Huang J."/>
            <person name="Sun D."/>
            <person name="Wang L."/>
            <person name="Ye M."/>
            <person name="Zou H."/>
        </authorList>
    </citation>
    <scope>PHOSPHORYLATION [LARGE SCALE ANALYSIS] AT SER-35 AND SER-36</scope>
    <scope>IDENTIFICATION BY MASS SPECTROMETRY [LARGE SCALE ANALYSIS]</scope>
    <source>
        <tissue>Liver</tissue>
    </source>
</reference>
<reference key="18">
    <citation type="journal article" date="2015" name="Proteomics">
        <title>N-terminome analysis of the human mitochondrial proteome.</title>
        <authorList>
            <person name="Vaca Jacome A.S."/>
            <person name="Rabilloud T."/>
            <person name="Schaeffer-Reiss C."/>
            <person name="Rompais M."/>
            <person name="Ayoub D."/>
            <person name="Lane L."/>
            <person name="Bairoch A."/>
            <person name="Van Dorsselaer A."/>
            <person name="Carapito C."/>
        </authorList>
    </citation>
    <scope>IDENTIFICATION BY MASS SPECTROMETRY [LARGE SCALE ANALYSIS]</scope>
</reference>
<reference key="19">
    <citation type="journal article" date="2009" name="J. Cell Biol.">
        <title>PtdIns4P recognition by Vps74/GOLPH3 links PtdIns 4-kinase signaling to retrograde Golgi trafficking.</title>
        <authorList>
            <person name="Wood C.S."/>
            <person name="Schmitz K.R."/>
            <person name="Bessman N.J."/>
            <person name="Setty T.G."/>
            <person name="Ferguson K.M."/>
            <person name="Burd C.G."/>
        </authorList>
    </citation>
    <scope>X-RAY CRYSTALLOGRAPHY (2.9 ANGSTROMS) OF 52-298</scope>
    <scope>LIPID-BINDING</scope>
    <scope>OLIGOMERIZATION</scope>
    <scope>DISULFIDE BOND</scope>
    <scope>MUTAGENESIS OF TRP-81; ARG-90; ARG-171 AND ARG-174</scope>
</reference>
<sequence>MTSLTQRSSGLVQRRTEASRNAADKERAAGGGAGSSEDDAQSRRDEQDDDDKGDSKETRLTLMEEVLLLGLKDREGYTSFWNDCISSGLRGCMLIELALRGRLQLEACGMRRKSLLTRKVICKSDAPTGDVLLDEALKHVKETQPPETVQNWIELLSGETWNPLKLHYQLRNVRERLAKNLVEKGVLTTEKQNFLLFDMTTHPLTNNNIKQRLIKKVQEAVLDKWVNDPHRMDRRLLALIYLAHASDVLENAFAPLLDEQYDLATKRVRQLLDLDPEVECLKANTNEVLWAVVAAFTK</sequence>
<proteinExistence type="evidence at protein level"/>
<gene>
    <name type="primary">GOLPH3</name>
    <name type="synonym">GPP34</name>
</gene>
<dbReference type="EMBL" id="AJ296152">
    <property type="protein sequence ID" value="CAC13124.1"/>
    <property type="molecule type" value="mRNA"/>
</dbReference>
<dbReference type="EMBL" id="AK075156">
    <property type="protein sequence ID" value="BAC11438.1"/>
    <property type="molecule type" value="mRNA"/>
</dbReference>
<dbReference type="EMBL" id="AL356292">
    <property type="status" value="NOT_ANNOTATED_CDS"/>
    <property type="molecule type" value="Genomic_DNA"/>
</dbReference>
<dbReference type="EMBL" id="AL356356">
    <property type="status" value="NOT_ANNOTATED_CDS"/>
    <property type="molecule type" value="Genomic_DNA"/>
</dbReference>
<dbReference type="EMBL" id="BC012123">
    <property type="protein sequence ID" value="AAH12123.1"/>
    <property type="molecule type" value="mRNA"/>
</dbReference>
<dbReference type="EMBL" id="BC033725">
    <property type="protein sequence ID" value="AAH33725.1"/>
    <property type="molecule type" value="mRNA"/>
</dbReference>
<dbReference type="EMBL" id="BC063586">
    <property type="protein sequence ID" value="AAH63586.1"/>
    <property type="molecule type" value="mRNA"/>
</dbReference>
<dbReference type="EMBL" id="AL133078">
    <property type="protein sequence ID" value="CAB61398.1"/>
    <property type="molecule type" value="mRNA"/>
</dbReference>
<dbReference type="CCDS" id="CCDS3896.1"/>
<dbReference type="PIR" id="T42677">
    <property type="entry name" value="T42677"/>
</dbReference>
<dbReference type="RefSeq" id="NP_071413.1">
    <property type="nucleotide sequence ID" value="NM_022130.4"/>
</dbReference>
<dbReference type="PDB" id="3KN1">
    <property type="method" value="X-ray"/>
    <property type="resolution" value="2.90 A"/>
    <property type="chains" value="A=52-298"/>
</dbReference>
<dbReference type="PDBsum" id="3KN1"/>
<dbReference type="SMR" id="Q9H4A6"/>
<dbReference type="BioGRID" id="122048">
    <property type="interactions" value="147"/>
</dbReference>
<dbReference type="FunCoup" id="Q9H4A6">
    <property type="interactions" value="3337"/>
</dbReference>
<dbReference type="IntAct" id="Q9H4A6">
    <property type="interactions" value="68"/>
</dbReference>
<dbReference type="MINT" id="Q9H4A6"/>
<dbReference type="STRING" id="9606.ENSP00000265070"/>
<dbReference type="iPTMnet" id="Q9H4A6"/>
<dbReference type="MetOSite" id="Q9H4A6"/>
<dbReference type="PhosphoSitePlus" id="Q9H4A6"/>
<dbReference type="BioMuta" id="GOLPH3"/>
<dbReference type="DMDM" id="50400651"/>
<dbReference type="jPOST" id="Q9H4A6"/>
<dbReference type="MassIVE" id="Q9H4A6"/>
<dbReference type="PaxDb" id="9606-ENSP00000265070"/>
<dbReference type="PeptideAtlas" id="Q9H4A6"/>
<dbReference type="ProteomicsDB" id="80811"/>
<dbReference type="Pumba" id="Q9H4A6"/>
<dbReference type="Antibodypedia" id="22696">
    <property type="antibodies" value="289 antibodies from 36 providers"/>
</dbReference>
<dbReference type="DNASU" id="64083"/>
<dbReference type="Ensembl" id="ENST00000265070.7">
    <property type="protein sequence ID" value="ENSP00000265070.6"/>
    <property type="gene ID" value="ENSG00000113384.14"/>
</dbReference>
<dbReference type="GeneID" id="64083"/>
<dbReference type="KEGG" id="hsa:64083"/>
<dbReference type="MANE-Select" id="ENST00000265070.7">
    <property type="protein sequence ID" value="ENSP00000265070.6"/>
    <property type="RefSeq nucleotide sequence ID" value="NM_022130.4"/>
    <property type="RefSeq protein sequence ID" value="NP_071413.1"/>
</dbReference>
<dbReference type="UCSC" id="uc003jhp.2">
    <property type="organism name" value="human"/>
</dbReference>
<dbReference type="AGR" id="HGNC:15452"/>
<dbReference type="CTD" id="64083"/>
<dbReference type="DisGeNET" id="64083"/>
<dbReference type="GeneCards" id="GOLPH3"/>
<dbReference type="HGNC" id="HGNC:15452">
    <property type="gene designation" value="GOLPH3"/>
</dbReference>
<dbReference type="HPA" id="ENSG00000113384">
    <property type="expression patterns" value="Low tissue specificity"/>
</dbReference>
<dbReference type="MIM" id="612207">
    <property type="type" value="gene"/>
</dbReference>
<dbReference type="neXtProt" id="NX_Q9H4A6"/>
<dbReference type="OpenTargets" id="ENSG00000113384"/>
<dbReference type="PharmGKB" id="PA28812"/>
<dbReference type="VEuPathDB" id="HostDB:ENSG00000113384"/>
<dbReference type="eggNOG" id="KOG3983">
    <property type="taxonomic scope" value="Eukaryota"/>
</dbReference>
<dbReference type="GeneTree" id="ENSGT00390000007153"/>
<dbReference type="HOGENOM" id="CLU_036311_0_0_1"/>
<dbReference type="InParanoid" id="Q9H4A6"/>
<dbReference type="OMA" id="GETWNLL"/>
<dbReference type="OrthoDB" id="2189106at2759"/>
<dbReference type="PAN-GO" id="Q9H4A6">
    <property type="GO annotations" value="8 GO annotations based on evolutionary models"/>
</dbReference>
<dbReference type="PhylomeDB" id="Q9H4A6"/>
<dbReference type="TreeFam" id="TF314360"/>
<dbReference type="PathwayCommons" id="Q9H4A6"/>
<dbReference type="SignaLink" id="Q9H4A6"/>
<dbReference type="SIGNOR" id="Q9H4A6"/>
<dbReference type="BioGRID-ORCS" id="64083">
    <property type="hits" value="16 hits in 1155 CRISPR screens"/>
</dbReference>
<dbReference type="ChiTaRS" id="GOLPH3">
    <property type="organism name" value="human"/>
</dbReference>
<dbReference type="EvolutionaryTrace" id="Q9H4A6"/>
<dbReference type="GenomeRNAi" id="64083"/>
<dbReference type="Pharos" id="Q9H4A6">
    <property type="development level" value="Tbio"/>
</dbReference>
<dbReference type="PRO" id="PR:Q9H4A6"/>
<dbReference type="Proteomes" id="UP000005640">
    <property type="component" value="Chromosome 5"/>
</dbReference>
<dbReference type="RNAct" id="Q9H4A6">
    <property type="molecule type" value="protein"/>
</dbReference>
<dbReference type="Bgee" id="ENSG00000113384">
    <property type="expression patterns" value="Expressed in secondary oocyte and 209 other cell types or tissues"/>
</dbReference>
<dbReference type="ExpressionAtlas" id="Q9H4A6">
    <property type="expression patterns" value="baseline and differential"/>
</dbReference>
<dbReference type="GO" id="GO:0005829">
    <property type="term" value="C:cytosol"/>
    <property type="evidence" value="ECO:0000314"/>
    <property type="project" value="UniProtKB"/>
</dbReference>
<dbReference type="GO" id="GO:0005768">
    <property type="term" value="C:endosome"/>
    <property type="evidence" value="ECO:0007669"/>
    <property type="project" value="UniProtKB-SubCell"/>
</dbReference>
<dbReference type="GO" id="GO:0005794">
    <property type="term" value="C:Golgi apparatus"/>
    <property type="evidence" value="ECO:0000314"/>
    <property type="project" value="HPA"/>
</dbReference>
<dbReference type="GO" id="GO:0031985">
    <property type="term" value="C:Golgi cisterna"/>
    <property type="evidence" value="ECO:0000314"/>
    <property type="project" value="UniProtKB"/>
</dbReference>
<dbReference type="GO" id="GO:0032580">
    <property type="term" value="C:Golgi cisterna membrane"/>
    <property type="evidence" value="ECO:0007669"/>
    <property type="project" value="UniProtKB-SubCell"/>
</dbReference>
<dbReference type="GO" id="GO:0000139">
    <property type="term" value="C:Golgi membrane"/>
    <property type="evidence" value="ECO:0007669"/>
    <property type="project" value="GOC"/>
</dbReference>
<dbReference type="GO" id="GO:0043231">
    <property type="term" value="C:intracellular membrane-bounded organelle"/>
    <property type="evidence" value="ECO:0000314"/>
    <property type="project" value="HPA"/>
</dbReference>
<dbReference type="GO" id="GO:0005758">
    <property type="term" value="C:mitochondrial intermembrane space"/>
    <property type="evidence" value="ECO:0007669"/>
    <property type="project" value="UniProtKB-SubCell"/>
</dbReference>
<dbReference type="GO" id="GO:0005739">
    <property type="term" value="C:mitochondrion"/>
    <property type="evidence" value="ECO:0000314"/>
    <property type="project" value="UniProtKB"/>
</dbReference>
<dbReference type="GO" id="GO:0005886">
    <property type="term" value="C:plasma membrane"/>
    <property type="evidence" value="ECO:0007669"/>
    <property type="project" value="UniProtKB-SubCell"/>
</dbReference>
<dbReference type="GO" id="GO:0005802">
    <property type="term" value="C:trans-Golgi network"/>
    <property type="evidence" value="ECO:0000314"/>
    <property type="project" value="UniProtKB"/>
</dbReference>
<dbReference type="GO" id="GO:0140312">
    <property type="term" value="F:cargo adaptor activity"/>
    <property type="evidence" value="ECO:0000314"/>
    <property type="project" value="FlyBase"/>
</dbReference>
<dbReference type="GO" id="GO:0019899">
    <property type="term" value="F:enzyme binding"/>
    <property type="evidence" value="ECO:0000353"/>
    <property type="project" value="UniProtKB"/>
</dbReference>
<dbReference type="GO" id="GO:0070273">
    <property type="term" value="F:phosphatidylinositol-4-phosphate binding"/>
    <property type="evidence" value="ECO:0000314"/>
    <property type="project" value="UniProtKB"/>
</dbReference>
<dbReference type="GO" id="GO:0090164">
    <property type="term" value="P:asymmetric Golgi ribbon formation"/>
    <property type="evidence" value="ECO:0000315"/>
    <property type="project" value="CACAO"/>
</dbReference>
<dbReference type="GO" id="GO:0060352">
    <property type="term" value="P:cell adhesion molecule production"/>
    <property type="evidence" value="ECO:0000315"/>
    <property type="project" value="UniProtKB"/>
</dbReference>
<dbReference type="GO" id="GO:0016477">
    <property type="term" value="P:cell migration"/>
    <property type="evidence" value="ECO:0000315"/>
    <property type="project" value="UniProtKB"/>
</dbReference>
<dbReference type="GO" id="GO:0072752">
    <property type="term" value="P:cellular response to rapamycin"/>
    <property type="evidence" value="ECO:0000315"/>
    <property type="project" value="UniProtKB"/>
</dbReference>
<dbReference type="GO" id="GO:0010467">
    <property type="term" value="P:gene expression"/>
    <property type="evidence" value="ECO:0000315"/>
    <property type="project" value="UniProtKB"/>
</dbReference>
<dbReference type="GO" id="GO:0009101">
    <property type="term" value="P:glycoprotein biosynthetic process"/>
    <property type="evidence" value="ECO:0000315"/>
    <property type="project" value="UniProtKB"/>
</dbReference>
<dbReference type="GO" id="GO:0007030">
    <property type="term" value="P:Golgi organization"/>
    <property type="evidence" value="ECO:0000315"/>
    <property type="project" value="UniProtKB"/>
</dbReference>
<dbReference type="GO" id="GO:0090161">
    <property type="term" value="P:Golgi ribbon formation"/>
    <property type="evidence" value="ECO:0000315"/>
    <property type="project" value="CACAO"/>
</dbReference>
<dbReference type="GO" id="GO:0043001">
    <property type="term" value="P:Golgi to plasma membrane protein transport"/>
    <property type="evidence" value="ECO:0000315"/>
    <property type="project" value="UniProtKB"/>
</dbReference>
<dbReference type="GO" id="GO:0048194">
    <property type="term" value="P:Golgi vesicle budding"/>
    <property type="evidence" value="ECO:0000315"/>
    <property type="project" value="UniProtKB"/>
</dbReference>
<dbReference type="GO" id="GO:0030032">
    <property type="term" value="P:lamellipodium assembly"/>
    <property type="evidence" value="ECO:0000315"/>
    <property type="project" value="UniProtKB"/>
</dbReference>
<dbReference type="GO" id="GO:0050901">
    <property type="term" value="P:leukocyte tethering or rolling"/>
    <property type="evidence" value="ECO:0000315"/>
    <property type="project" value="UniProtKB"/>
</dbReference>
<dbReference type="GO" id="GO:0043066">
    <property type="term" value="P:negative regulation of apoptotic process"/>
    <property type="evidence" value="ECO:0000315"/>
    <property type="project" value="CACAO"/>
</dbReference>
<dbReference type="GO" id="GO:0050714">
    <property type="term" value="P:positive regulation of protein secretion"/>
    <property type="evidence" value="ECO:0000315"/>
    <property type="project" value="UniProtKB"/>
</dbReference>
<dbReference type="GO" id="GO:0032008">
    <property type="term" value="P:positive regulation of TOR signaling"/>
    <property type="evidence" value="ECO:0000315"/>
    <property type="project" value="UniProtKB"/>
</dbReference>
<dbReference type="GO" id="GO:0045053">
    <property type="term" value="P:protein retention in Golgi apparatus"/>
    <property type="evidence" value="ECO:0000315"/>
    <property type="project" value="UniProtKB"/>
</dbReference>
<dbReference type="GO" id="GO:0009306">
    <property type="term" value="P:protein secretion"/>
    <property type="evidence" value="ECO:0000315"/>
    <property type="project" value="UniProtKB"/>
</dbReference>
<dbReference type="GO" id="GO:0140450">
    <property type="term" value="P:protein targeting to Golgi apparatus"/>
    <property type="evidence" value="ECO:0000315"/>
    <property type="project" value="FlyBase"/>
</dbReference>
<dbReference type="GO" id="GO:0010821">
    <property type="term" value="P:regulation of mitochondrion organization"/>
    <property type="evidence" value="ECO:0000314"/>
    <property type="project" value="UniProtKB"/>
</dbReference>
<dbReference type="GO" id="GO:0006890">
    <property type="term" value="P:retrograde vesicle-mediated transport, Golgi to endoplasmic reticulum"/>
    <property type="evidence" value="ECO:0000318"/>
    <property type="project" value="GO_Central"/>
</dbReference>
<dbReference type="FunFam" id="1.10.3630.10:FF:000001">
    <property type="entry name" value="Golgi phosphoprotein 3"/>
    <property type="match status" value="1"/>
</dbReference>
<dbReference type="Gene3D" id="1.10.3630.10">
    <property type="entry name" value="yeast vps74-n-term truncation variant domain like"/>
    <property type="match status" value="1"/>
</dbReference>
<dbReference type="InterPro" id="IPR008628">
    <property type="entry name" value="GPP34-like"/>
</dbReference>
<dbReference type="InterPro" id="IPR038261">
    <property type="entry name" value="GPP34-like_sf"/>
</dbReference>
<dbReference type="PANTHER" id="PTHR12704:SF3">
    <property type="entry name" value="GOLGI PHOSPHOPROTEIN 3"/>
    <property type="match status" value="1"/>
</dbReference>
<dbReference type="PANTHER" id="PTHR12704">
    <property type="entry name" value="TRANS-GOLGI PROTEIN GMX33"/>
    <property type="match status" value="1"/>
</dbReference>
<dbReference type="Pfam" id="PF05719">
    <property type="entry name" value="GPP34"/>
    <property type="match status" value="1"/>
</dbReference>
<accession>Q9H4A6</accession>
<accession>Q9UIW5</accession>
<organism>
    <name type="scientific">Homo sapiens</name>
    <name type="common">Human</name>
    <dbReference type="NCBI Taxonomy" id="9606"/>
    <lineage>
        <taxon>Eukaryota</taxon>
        <taxon>Metazoa</taxon>
        <taxon>Chordata</taxon>
        <taxon>Craniata</taxon>
        <taxon>Vertebrata</taxon>
        <taxon>Euteleostomi</taxon>
        <taxon>Mammalia</taxon>
        <taxon>Eutheria</taxon>
        <taxon>Euarchontoglires</taxon>
        <taxon>Primates</taxon>
        <taxon>Haplorrhini</taxon>
        <taxon>Catarrhini</taxon>
        <taxon>Hominidae</taxon>
        <taxon>Homo</taxon>
    </lineage>
</organism>
<keyword id="KW-0002">3D-structure</keyword>
<keyword id="KW-1003">Cell membrane</keyword>
<keyword id="KW-1015">Disulfide bond</keyword>
<keyword id="KW-0967">Endosome</keyword>
<keyword id="KW-0333">Golgi apparatus</keyword>
<keyword id="KW-0446">Lipid-binding</keyword>
<keyword id="KW-0472">Membrane</keyword>
<keyword id="KW-0496">Mitochondrion</keyword>
<keyword id="KW-0597">Phosphoprotein</keyword>
<keyword id="KW-0653">Protein transport</keyword>
<keyword id="KW-1267">Proteomics identification</keyword>
<keyword id="KW-1185">Reference proteome</keyword>
<keyword id="KW-0813">Transport</keyword>
<evidence type="ECO:0000250" key="1"/>
<evidence type="ECO:0000256" key="2">
    <source>
        <dbReference type="SAM" id="MobiDB-lite"/>
    </source>
</evidence>
<evidence type="ECO:0000269" key="3">
    <source>
    </source>
</evidence>
<evidence type="ECO:0000269" key="4">
    <source>
    </source>
</evidence>
<evidence type="ECO:0000269" key="5">
    <source>
    </source>
</evidence>
<evidence type="ECO:0000269" key="6">
    <source>
    </source>
</evidence>
<evidence type="ECO:0000269" key="7">
    <source>
    </source>
</evidence>
<evidence type="ECO:0000269" key="8">
    <source>
    </source>
</evidence>
<evidence type="ECO:0000269" key="9">
    <source>
    </source>
</evidence>
<evidence type="ECO:0000269" key="10">
    <source>
    </source>
</evidence>
<evidence type="ECO:0000269" key="11">
    <source>
    </source>
</evidence>
<evidence type="ECO:0000269" key="12">
    <source>
    </source>
</evidence>
<evidence type="ECO:0000305" key="13"/>
<evidence type="ECO:0007744" key="14">
    <source>
    </source>
</evidence>
<evidence type="ECO:0007744" key="15">
    <source>
    </source>
</evidence>
<evidence type="ECO:0007829" key="16">
    <source>
        <dbReference type="PDB" id="3KN1"/>
    </source>
</evidence>
<name>GOLP3_HUMAN</name>